<keyword id="KW-0021">Allosteric enzyme</keyword>
<keyword id="KW-0328">Glycosyltransferase</keyword>
<keyword id="KW-0342">GTP-binding</keyword>
<keyword id="KW-0460">Magnesium</keyword>
<keyword id="KW-0547">Nucleotide-binding</keyword>
<keyword id="KW-1185">Reference proteome</keyword>
<keyword id="KW-0808">Transferase</keyword>
<comment type="function">
    <text evidence="1">Catalyzes the conversion of uracil and 5-phospho-alpha-D-ribose 1-diphosphate (PRPP) to UMP and diphosphate.</text>
</comment>
<comment type="catalytic activity">
    <reaction evidence="1">
        <text>UMP + diphosphate = 5-phospho-alpha-D-ribose 1-diphosphate + uracil</text>
        <dbReference type="Rhea" id="RHEA:13017"/>
        <dbReference type="ChEBI" id="CHEBI:17568"/>
        <dbReference type="ChEBI" id="CHEBI:33019"/>
        <dbReference type="ChEBI" id="CHEBI:57865"/>
        <dbReference type="ChEBI" id="CHEBI:58017"/>
        <dbReference type="EC" id="2.4.2.9"/>
    </reaction>
</comment>
<comment type="cofactor">
    <cofactor evidence="1">
        <name>Mg(2+)</name>
        <dbReference type="ChEBI" id="CHEBI:18420"/>
    </cofactor>
    <text evidence="1">Binds 1 Mg(2+) ion per subunit. The magnesium is bound as Mg-PRPP.</text>
</comment>
<comment type="activity regulation">
    <text evidence="1">Allosterically activated by GTP.</text>
</comment>
<comment type="pathway">
    <text evidence="1">Pyrimidine metabolism; UMP biosynthesis via salvage pathway; UMP from uracil: step 1/1.</text>
</comment>
<comment type="similarity">
    <text evidence="1">Belongs to the UPRTase family.</text>
</comment>
<dbReference type="EC" id="2.4.2.9" evidence="1"/>
<dbReference type="EMBL" id="CP000854">
    <property type="protein sequence ID" value="ACC39675.1"/>
    <property type="molecule type" value="Genomic_DNA"/>
</dbReference>
<dbReference type="RefSeq" id="WP_012393096.1">
    <property type="nucleotide sequence ID" value="NC_010612.1"/>
</dbReference>
<dbReference type="SMR" id="B2HDV9"/>
<dbReference type="STRING" id="216594.MMAR_1217"/>
<dbReference type="GeneID" id="34342685"/>
<dbReference type="KEGG" id="mmi:MMAR_1217"/>
<dbReference type="eggNOG" id="COG0035">
    <property type="taxonomic scope" value="Bacteria"/>
</dbReference>
<dbReference type="HOGENOM" id="CLU_067096_2_3_11"/>
<dbReference type="OrthoDB" id="9781675at2"/>
<dbReference type="UniPathway" id="UPA00574">
    <property type="reaction ID" value="UER00636"/>
</dbReference>
<dbReference type="Proteomes" id="UP000001190">
    <property type="component" value="Chromosome"/>
</dbReference>
<dbReference type="GO" id="GO:0005525">
    <property type="term" value="F:GTP binding"/>
    <property type="evidence" value="ECO:0007669"/>
    <property type="project" value="UniProtKB-KW"/>
</dbReference>
<dbReference type="GO" id="GO:0000287">
    <property type="term" value="F:magnesium ion binding"/>
    <property type="evidence" value="ECO:0007669"/>
    <property type="project" value="UniProtKB-UniRule"/>
</dbReference>
<dbReference type="GO" id="GO:0004845">
    <property type="term" value="F:uracil phosphoribosyltransferase activity"/>
    <property type="evidence" value="ECO:0007669"/>
    <property type="project" value="UniProtKB-UniRule"/>
</dbReference>
<dbReference type="GO" id="GO:0044206">
    <property type="term" value="P:UMP salvage"/>
    <property type="evidence" value="ECO:0007669"/>
    <property type="project" value="UniProtKB-UniRule"/>
</dbReference>
<dbReference type="GO" id="GO:0006223">
    <property type="term" value="P:uracil salvage"/>
    <property type="evidence" value="ECO:0007669"/>
    <property type="project" value="InterPro"/>
</dbReference>
<dbReference type="CDD" id="cd06223">
    <property type="entry name" value="PRTases_typeI"/>
    <property type="match status" value="1"/>
</dbReference>
<dbReference type="FunFam" id="3.40.50.2020:FF:000003">
    <property type="entry name" value="Uracil phosphoribosyltransferase"/>
    <property type="match status" value="1"/>
</dbReference>
<dbReference type="Gene3D" id="3.40.50.2020">
    <property type="match status" value="1"/>
</dbReference>
<dbReference type="HAMAP" id="MF_01218_B">
    <property type="entry name" value="Upp_B"/>
    <property type="match status" value="1"/>
</dbReference>
<dbReference type="InterPro" id="IPR000836">
    <property type="entry name" value="PRibTrfase_dom"/>
</dbReference>
<dbReference type="InterPro" id="IPR029057">
    <property type="entry name" value="PRTase-like"/>
</dbReference>
<dbReference type="InterPro" id="IPR034332">
    <property type="entry name" value="Upp_B"/>
</dbReference>
<dbReference type="InterPro" id="IPR050054">
    <property type="entry name" value="UPRTase/APRTase"/>
</dbReference>
<dbReference type="InterPro" id="IPR005765">
    <property type="entry name" value="Ura_phspho_trans"/>
</dbReference>
<dbReference type="NCBIfam" id="NF001097">
    <property type="entry name" value="PRK00129.1"/>
    <property type="match status" value="1"/>
</dbReference>
<dbReference type="NCBIfam" id="TIGR01091">
    <property type="entry name" value="upp"/>
    <property type="match status" value="1"/>
</dbReference>
<dbReference type="PANTHER" id="PTHR32315">
    <property type="entry name" value="ADENINE PHOSPHORIBOSYLTRANSFERASE"/>
    <property type="match status" value="1"/>
</dbReference>
<dbReference type="PANTHER" id="PTHR32315:SF4">
    <property type="entry name" value="URACIL PHOSPHORIBOSYLTRANSFERASE, CHLOROPLASTIC"/>
    <property type="match status" value="1"/>
</dbReference>
<dbReference type="Pfam" id="PF14681">
    <property type="entry name" value="UPRTase"/>
    <property type="match status" value="1"/>
</dbReference>
<dbReference type="SUPFAM" id="SSF53271">
    <property type="entry name" value="PRTase-like"/>
    <property type="match status" value="1"/>
</dbReference>
<sequence>MEVHVIDHPLAAARLTALRDERTGNAAFRKALRELTLVLVYEATRAAPTESVAIRTPLAATTGLRLANPPLLVPVLRAGLGMVDEAHAALPEARVGFVGIARNEQTHQPVPYLESLPDDLSGLPVMVLDPMLATGGSMTFTVDLLLSRGATDITVLCVVAAPQGVAALEKAAPNARLFTVAIDDGLNEEAYIVPGLGDAGDRQFGPR</sequence>
<evidence type="ECO:0000255" key="1">
    <source>
        <dbReference type="HAMAP-Rule" id="MF_01218"/>
    </source>
</evidence>
<reference key="1">
    <citation type="journal article" date="2008" name="Genome Res.">
        <title>Insights from the complete genome sequence of Mycobacterium marinum on the evolution of Mycobacterium tuberculosis.</title>
        <authorList>
            <person name="Stinear T.P."/>
            <person name="Seemann T."/>
            <person name="Harrison P.F."/>
            <person name="Jenkin G.A."/>
            <person name="Davies J.K."/>
            <person name="Johnson P.D."/>
            <person name="Abdellah Z."/>
            <person name="Arrowsmith C."/>
            <person name="Chillingworth T."/>
            <person name="Churcher C."/>
            <person name="Clarke K."/>
            <person name="Cronin A."/>
            <person name="Davis P."/>
            <person name="Goodhead I."/>
            <person name="Holroyd N."/>
            <person name="Jagels K."/>
            <person name="Lord A."/>
            <person name="Moule S."/>
            <person name="Mungall K."/>
            <person name="Norbertczak H."/>
            <person name="Quail M.A."/>
            <person name="Rabbinowitsch E."/>
            <person name="Walker D."/>
            <person name="White B."/>
            <person name="Whitehead S."/>
            <person name="Small P.L."/>
            <person name="Brosch R."/>
            <person name="Ramakrishnan L."/>
            <person name="Fischbach M.A."/>
            <person name="Parkhill J."/>
            <person name="Cole S.T."/>
        </authorList>
    </citation>
    <scope>NUCLEOTIDE SEQUENCE [LARGE SCALE GENOMIC DNA]</scope>
    <source>
        <strain>ATCC BAA-535 / M</strain>
    </source>
</reference>
<name>UPP_MYCMM</name>
<accession>B2HDV9</accession>
<proteinExistence type="inferred from homology"/>
<feature type="chain" id="PRO_1000139144" description="Uracil phosphoribosyltransferase">
    <location>
        <begin position="1"/>
        <end position="207"/>
    </location>
</feature>
<feature type="binding site" evidence="1">
    <location>
        <position position="77"/>
    </location>
    <ligand>
        <name>5-phospho-alpha-D-ribose 1-diphosphate</name>
        <dbReference type="ChEBI" id="CHEBI:58017"/>
    </ligand>
</feature>
<feature type="binding site" evidence="1">
    <location>
        <position position="102"/>
    </location>
    <ligand>
        <name>5-phospho-alpha-D-ribose 1-diphosphate</name>
        <dbReference type="ChEBI" id="CHEBI:58017"/>
    </ligand>
</feature>
<feature type="binding site" evidence="1">
    <location>
        <begin position="129"/>
        <end position="137"/>
    </location>
    <ligand>
        <name>5-phospho-alpha-D-ribose 1-diphosphate</name>
        <dbReference type="ChEBI" id="CHEBI:58017"/>
    </ligand>
</feature>
<feature type="binding site" evidence="1">
    <location>
        <position position="192"/>
    </location>
    <ligand>
        <name>uracil</name>
        <dbReference type="ChEBI" id="CHEBI:17568"/>
    </ligand>
</feature>
<feature type="binding site" evidence="1">
    <location>
        <begin position="197"/>
        <end position="199"/>
    </location>
    <ligand>
        <name>uracil</name>
        <dbReference type="ChEBI" id="CHEBI:17568"/>
    </ligand>
</feature>
<feature type="binding site" evidence="1">
    <location>
        <position position="198"/>
    </location>
    <ligand>
        <name>5-phospho-alpha-D-ribose 1-diphosphate</name>
        <dbReference type="ChEBI" id="CHEBI:58017"/>
    </ligand>
</feature>
<gene>
    <name evidence="1" type="primary">upp</name>
    <name type="ordered locus">MMAR_1217</name>
</gene>
<protein>
    <recommendedName>
        <fullName evidence="1">Uracil phosphoribosyltransferase</fullName>
        <ecNumber evidence="1">2.4.2.9</ecNumber>
    </recommendedName>
    <alternativeName>
        <fullName evidence="1">UMP pyrophosphorylase</fullName>
    </alternativeName>
    <alternativeName>
        <fullName evidence="1">UPRTase</fullName>
    </alternativeName>
</protein>
<organism>
    <name type="scientific">Mycobacterium marinum (strain ATCC BAA-535 / M)</name>
    <dbReference type="NCBI Taxonomy" id="216594"/>
    <lineage>
        <taxon>Bacteria</taxon>
        <taxon>Bacillati</taxon>
        <taxon>Actinomycetota</taxon>
        <taxon>Actinomycetes</taxon>
        <taxon>Mycobacteriales</taxon>
        <taxon>Mycobacteriaceae</taxon>
        <taxon>Mycobacterium</taxon>
        <taxon>Mycobacterium ulcerans group</taxon>
    </lineage>
</organism>